<organism>
    <name type="scientific">Salmonella typhimurium (strain LT2 / SGSC1412 / ATCC 700720)</name>
    <dbReference type="NCBI Taxonomy" id="99287"/>
    <lineage>
        <taxon>Bacteria</taxon>
        <taxon>Pseudomonadati</taxon>
        <taxon>Pseudomonadota</taxon>
        <taxon>Gammaproteobacteria</taxon>
        <taxon>Enterobacterales</taxon>
        <taxon>Enterobacteriaceae</taxon>
        <taxon>Salmonella</taxon>
    </lineage>
</organism>
<comment type="function">
    <text evidence="1">Catalyzes the reversible epimerization at C-2 of UDP-N-acetylglucosamine (UDP-GlcNAc) and thereby provides bacteria with UDP-N-acetylmannosamine (UDP-ManNAc), the activated donor of ManNAc residues.</text>
</comment>
<comment type="catalytic activity">
    <reaction evidence="1">
        <text>UDP-N-acetyl-alpha-D-glucosamine = UDP-N-acetyl-alpha-D-mannosamine</text>
        <dbReference type="Rhea" id="RHEA:17213"/>
        <dbReference type="ChEBI" id="CHEBI:57705"/>
        <dbReference type="ChEBI" id="CHEBI:68623"/>
        <dbReference type="EC" id="5.1.3.14"/>
    </reaction>
</comment>
<comment type="pathway">
    <text evidence="1">Bacterial outer membrane biogenesis; enterobacterial common antigen biosynthesis.</text>
</comment>
<comment type="subunit">
    <text evidence="1">Homodimer.</text>
</comment>
<comment type="subcellular location">
    <subcellularLocation>
        <location evidence="1">Cytoplasm</location>
    </subcellularLocation>
</comment>
<comment type="similarity">
    <text evidence="1">Belongs to the UDP-N-acetylglucosamine 2-epimerase family.</text>
</comment>
<feature type="chain" id="PRO_0000208530" description="UDP-N-acetylglucosamine 2-epimerase">
    <location>
        <begin position="1"/>
        <end position="376"/>
    </location>
</feature>
<feature type="binding site" evidence="1">
    <location>
        <position position="10"/>
    </location>
    <ligand>
        <name>substrate</name>
    </ligand>
</feature>
<feature type="binding site" evidence="1">
    <location>
        <position position="15"/>
    </location>
    <ligand>
        <name>substrate</name>
    </ligand>
</feature>
<feature type="binding site" evidence="1">
    <location>
        <position position="95"/>
    </location>
    <ligand>
        <name>substrate</name>
    </ligand>
</feature>
<feature type="binding site" evidence="1">
    <location>
        <position position="117"/>
    </location>
    <ligand>
        <name>substrate</name>
    </ligand>
</feature>
<feature type="binding site" evidence="1">
    <location>
        <position position="213"/>
    </location>
    <ligand>
        <name>substrate</name>
    </ligand>
</feature>
<feature type="binding site" evidence="1">
    <location>
        <position position="271"/>
    </location>
    <ligand>
        <name>substrate</name>
    </ligand>
</feature>
<feature type="binding site" evidence="1">
    <location>
        <position position="276"/>
    </location>
    <ligand>
        <name>substrate</name>
    </ligand>
</feature>
<feature type="binding site" evidence="1">
    <location>
        <begin position="290"/>
        <end position="292"/>
    </location>
    <ligand>
        <name>substrate</name>
    </ligand>
</feature>
<feature type="binding site" evidence="1">
    <location>
        <position position="296"/>
    </location>
    <ligand>
        <name>substrate</name>
    </ligand>
</feature>
<feature type="binding site" evidence="1">
    <location>
        <position position="313"/>
    </location>
    <ligand>
        <name>substrate</name>
    </ligand>
</feature>
<evidence type="ECO:0000255" key="1">
    <source>
        <dbReference type="HAMAP-Rule" id="MF_02028"/>
    </source>
</evidence>
<accession>Q9L6R5</accession>
<dbReference type="EC" id="5.1.3.14" evidence="1"/>
<dbReference type="EMBL" id="AE006468">
    <property type="protein sequence ID" value="AAL22769.1"/>
    <property type="molecule type" value="Genomic_DNA"/>
</dbReference>
<dbReference type="EMBL" id="AF233324">
    <property type="protein sequence ID" value="AAF33467.1"/>
    <property type="molecule type" value="Genomic_DNA"/>
</dbReference>
<dbReference type="RefSeq" id="NP_462810.1">
    <property type="nucleotide sequence ID" value="NC_003197.2"/>
</dbReference>
<dbReference type="RefSeq" id="WP_000866685.1">
    <property type="nucleotide sequence ID" value="NC_003197.2"/>
</dbReference>
<dbReference type="SMR" id="Q9L6R5"/>
<dbReference type="STRING" id="99287.STM3920"/>
<dbReference type="PaxDb" id="99287-STM3920"/>
<dbReference type="GeneID" id="1255446"/>
<dbReference type="KEGG" id="stm:STM3920"/>
<dbReference type="PATRIC" id="fig|99287.12.peg.4141"/>
<dbReference type="HOGENOM" id="CLU_041674_1_0_6"/>
<dbReference type="OMA" id="CLTLRYN"/>
<dbReference type="PhylomeDB" id="Q9L6R5"/>
<dbReference type="BioCyc" id="SENT99287:STM3920-MONOMER"/>
<dbReference type="UniPathway" id="UPA00566"/>
<dbReference type="Proteomes" id="UP000001014">
    <property type="component" value="Chromosome"/>
</dbReference>
<dbReference type="GO" id="GO:0005737">
    <property type="term" value="C:cytoplasm"/>
    <property type="evidence" value="ECO:0007669"/>
    <property type="project" value="UniProtKB-SubCell"/>
</dbReference>
<dbReference type="GO" id="GO:0008761">
    <property type="term" value="F:UDP-N-acetylglucosamine 2-epimerase activity"/>
    <property type="evidence" value="ECO:0007669"/>
    <property type="project" value="UniProtKB-UniRule"/>
</dbReference>
<dbReference type="GO" id="GO:0009246">
    <property type="term" value="P:enterobacterial common antigen biosynthetic process"/>
    <property type="evidence" value="ECO:0007669"/>
    <property type="project" value="UniProtKB-UniRule"/>
</dbReference>
<dbReference type="CDD" id="cd03786">
    <property type="entry name" value="GTB_UDP-GlcNAc_2-Epimerase"/>
    <property type="match status" value="1"/>
</dbReference>
<dbReference type="FunFam" id="3.40.50.2000:FF:000043">
    <property type="entry name" value="UDP-N-acetylglucosamine 2-epimerase"/>
    <property type="match status" value="1"/>
</dbReference>
<dbReference type="FunFam" id="3.40.50.2000:FF:000068">
    <property type="entry name" value="UDP-N-acetylglucosamine 2-epimerase"/>
    <property type="match status" value="1"/>
</dbReference>
<dbReference type="Gene3D" id="3.40.50.2000">
    <property type="entry name" value="Glycogen Phosphorylase B"/>
    <property type="match status" value="2"/>
</dbReference>
<dbReference type="HAMAP" id="MF_02028">
    <property type="entry name" value="WecB_RffE"/>
    <property type="match status" value="1"/>
</dbReference>
<dbReference type="InterPro" id="IPR003331">
    <property type="entry name" value="UDP_GlcNAc_Epimerase_2_dom"/>
</dbReference>
<dbReference type="InterPro" id="IPR032892">
    <property type="entry name" value="WecB"/>
</dbReference>
<dbReference type="InterPro" id="IPR029767">
    <property type="entry name" value="WecB-like"/>
</dbReference>
<dbReference type="NCBIfam" id="TIGR00236">
    <property type="entry name" value="wecB"/>
    <property type="match status" value="1"/>
</dbReference>
<dbReference type="PANTHER" id="PTHR43174">
    <property type="entry name" value="UDP-N-ACETYLGLUCOSAMINE 2-EPIMERASE"/>
    <property type="match status" value="1"/>
</dbReference>
<dbReference type="PANTHER" id="PTHR43174:SF2">
    <property type="entry name" value="UDP-N-ACETYLGLUCOSAMINE 2-EPIMERASE"/>
    <property type="match status" value="1"/>
</dbReference>
<dbReference type="Pfam" id="PF02350">
    <property type="entry name" value="Epimerase_2"/>
    <property type="match status" value="1"/>
</dbReference>
<dbReference type="SUPFAM" id="SSF53756">
    <property type="entry name" value="UDP-Glycosyltransferase/glycogen phosphorylase"/>
    <property type="match status" value="1"/>
</dbReference>
<name>WECB_SALTY</name>
<gene>
    <name evidence="1" type="primary">wecB</name>
    <name type="synonym">rffE</name>
    <name type="ordered locus">STM3920</name>
    <name type="ORF">STMD1.70</name>
</gene>
<protein>
    <recommendedName>
        <fullName evidence="1">UDP-N-acetylglucosamine 2-epimerase</fullName>
        <ecNumber evidence="1">5.1.3.14</ecNumber>
    </recommendedName>
    <alternativeName>
        <fullName evidence="1">UDP-GlcNAc-2-epimerase</fullName>
    </alternativeName>
</protein>
<proteinExistence type="inferred from homology"/>
<reference key="1">
    <citation type="journal article" date="2001" name="Nature">
        <title>Complete genome sequence of Salmonella enterica serovar Typhimurium LT2.</title>
        <authorList>
            <person name="McClelland M."/>
            <person name="Sanderson K.E."/>
            <person name="Spieth J."/>
            <person name="Clifton S.W."/>
            <person name="Latreille P."/>
            <person name="Courtney L."/>
            <person name="Porwollik S."/>
            <person name="Ali J."/>
            <person name="Dante M."/>
            <person name="Du F."/>
            <person name="Hou S."/>
            <person name="Layman D."/>
            <person name="Leonard S."/>
            <person name="Nguyen C."/>
            <person name="Scott K."/>
            <person name="Holmes A."/>
            <person name="Grewal N."/>
            <person name="Mulvaney E."/>
            <person name="Ryan E."/>
            <person name="Sun H."/>
            <person name="Florea L."/>
            <person name="Miller W."/>
            <person name="Stoneking T."/>
            <person name="Nhan M."/>
            <person name="Waterston R."/>
            <person name="Wilson R.K."/>
        </authorList>
    </citation>
    <scope>NUCLEOTIDE SEQUENCE [LARGE SCALE GENOMIC DNA]</scope>
    <source>
        <strain>LT2 / SGSC1412 / ATCC 700720</strain>
    </source>
</reference>
<keyword id="KW-0963">Cytoplasm</keyword>
<keyword id="KW-0413">Isomerase</keyword>
<keyword id="KW-1185">Reference proteome</keyword>
<sequence length="376" mass="42165">MKVLTVFGTRPEAIKMAPLVHALEKDPHFEAKVCVTAQHREMLDQVLTLFSIVPDYDLNIMQPGQGLTEITCRILEGLKPILADFKPDVVLVHGDTTTTIATSLAAFYQRIPVGHVEAGLRTGDLYSPWPEEANRTLTGHLAMYHFAPTENSRQNLLRENIPDERIFVTGNTVIDALIWVRDRVLTSDTLQAELAEQYPFLNANKKMILVTGHRRESFGQGFEHICQALAEIAAANQNVQIVYPVHLNPNVSEPVNRILGHVENVVLIEPQDYLPFVWLMNHAWLILTDSGGIQEEAPSLGKPVLVMRETTERPEAITAGTVRLIGTDSRRIVAEVMRLLHDENEYQTMSRAHNPYGDGQSCARILQALKSYRVSL</sequence>